<keyword id="KW-0007">Acetylation</keyword>
<keyword id="KW-0067">ATP-binding</keyword>
<keyword id="KW-0143">Chaperone</keyword>
<keyword id="KW-0963">Cytoplasm</keyword>
<keyword id="KW-0903">Direct protein sequencing</keyword>
<keyword id="KW-0378">Hydrolase</keyword>
<keyword id="KW-0547">Nucleotide-binding</keyword>
<keyword id="KW-0597">Phosphoprotein</keyword>
<keyword id="KW-0648">Protein biosynthesis</keyword>
<keyword id="KW-1185">Reference proteome</keyword>
<reference key="1">
    <citation type="journal article" date="1994" name="Yeast">
        <title>A 21.7 kb DNA segment on the left arm of yeast chromosome XIV carries WHI3, GCR2, SPX18, SPX19, an homologue to the heat shock gene SSB1 and 8 new open reading frames of unknown function.</title>
        <authorList>
            <person name="Jonniaux J.-L."/>
            <person name="Coster F."/>
            <person name="Purnelle B."/>
            <person name="Goffeau A."/>
        </authorList>
    </citation>
    <scope>NUCLEOTIDE SEQUENCE [GENOMIC DNA]</scope>
    <source>
        <strain>ATCC 96604 / S288c / FY1679</strain>
    </source>
</reference>
<reference key="2">
    <citation type="journal article" date="1997" name="Nature">
        <title>The nucleotide sequence of Saccharomyces cerevisiae chromosome XIV and its evolutionary implications.</title>
        <authorList>
            <person name="Philippsen P."/>
            <person name="Kleine K."/>
            <person name="Poehlmann R."/>
            <person name="Duesterhoeft A."/>
            <person name="Hamberg K."/>
            <person name="Hegemann J.H."/>
            <person name="Obermaier B."/>
            <person name="Urrestarazu L.A."/>
            <person name="Aert R."/>
            <person name="Albermann K."/>
            <person name="Altmann R."/>
            <person name="Andre B."/>
            <person name="Baladron V."/>
            <person name="Ballesta J.P.G."/>
            <person name="Becam A.-M."/>
            <person name="Beinhauer J.D."/>
            <person name="Boskovic J."/>
            <person name="Buitrago M.J."/>
            <person name="Bussereau F."/>
            <person name="Coster F."/>
            <person name="Crouzet M."/>
            <person name="D'Angelo M."/>
            <person name="Dal Pero F."/>
            <person name="De Antoni A."/>
            <person name="del Rey F."/>
            <person name="Doignon F."/>
            <person name="Domdey H."/>
            <person name="Dubois E."/>
            <person name="Fiedler T.A."/>
            <person name="Fleig U."/>
            <person name="Floeth M."/>
            <person name="Fritz C."/>
            <person name="Gaillardin C."/>
            <person name="Garcia-Cantalejo J.M."/>
            <person name="Glansdorff N."/>
            <person name="Goffeau A."/>
            <person name="Gueldener U."/>
            <person name="Herbert C.J."/>
            <person name="Heumann K."/>
            <person name="Heuss-Neitzel D."/>
            <person name="Hilbert H."/>
            <person name="Hinni K."/>
            <person name="Iraqui Houssaini I."/>
            <person name="Jacquet M."/>
            <person name="Jimenez A."/>
            <person name="Jonniaux J.-L."/>
            <person name="Karpfinger-Hartl L."/>
            <person name="Lanfranchi G."/>
            <person name="Lepingle A."/>
            <person name="Levesque H."/>
            <person name="Lyck R."/>
            <person name="Maftahi M."/>
            <person name="Mallet L."/>
            <person name="Maurer C.T.C."/>
            <person name="Messenguy F."/>
            <person name="Mewes H.-W."/>
            <person name="Moestl D."/>
            <person name="Nasr F."/>
            <person name="Nicaud J.-M."/>
            <person name="Niedenthal R.K."/>
            <person name="Pandolfo D."/>
            <person name="Pierard A."/>
            <person name="Piravandi E."/>
            <person name="Planta R.J."/>
            <person name="Pohl T.M."/>
            <person name="Purnelle B."/>
            <person name="Rebischung C."/>
            <person name="Remacha M.A."/>
            <person name="Revuelta J.L."/>
            <person name="Rinke M."/>
            <person name="Saiz J.E."/>
            <person name="Sartorello F."/>
            <person name="Scherens B."/>
            <person name="Sen-Gupta M."/>
            <person name="Soler-Mira A."/>
            <person name="Urbanus J.H.M."/>
            <person name="Valle G."/>
            <person name="Van Dyck L."/>
            <person name="Verhasselt P."/>
            <person name="Vierendeels F."/>
            <person name="Vissers S."/>
            <person name="Voet M."/>
            <person name="Volckaert G."/>
            <person name="Wach A."/>
            <person name="Wambutt R."/>
            <person name="Wedler H."/>
            <person name="Zollner A."/>
            <person name="Hani J."/>
        </authorList>
    </citation>
    <scope>NUCLEOTIDE SEQUENCE [LARGE SCALE GENOMIC DNA]</scope>
    <source>
        <strain>ATCC 204508 / S288c</strain>
    </source>
</reference>
<reference key="3">
    <citation type="journal article" date="2014" name="G3 (Bethesda)">
        <title>The reference genome sequence of Saccharomyces cerevisiae: Then and now.</title>
        <authorList>
            <person name="Engel S.R."/>
            <person name="Dietrich F.S."/>
            <person name="Fisk D.G."/>
            <person name="Binkley G."/>
            <person name="Balakrishnan R."/>
            <person name="Costanzo M.C."/>
            <person name="Dwight S.S."/>
            <person name="Hitz B.C."/>
            <person name="Karra K."/>
            <person name="Nash R.S."/>
            <person name="Weng S."/>
            <person name="Wong E.D."/>
            <person name="Lloyd P."/>
            <person name="Skrzypek M.S."/>
            <person name="Miyasato S.R."/>
            <person name="Simison M."/>
            <person name="Cherry J.M."/>
        </authorList>
    </citation>
    <scope>GENOME REANNOTATION</scope>
    <source>
        <strain>ATCC 204508 / S288c</strain>
    </source>
</reference>
<reference key="4">
    <citation type="journal article" date="1982" name="Mol. Cell. Biol.">
        <title>Saccharomyces cerevisiae contains a complex multigene family related to the major heat shock-inducible gene of Drosophila.</title>
        <authorList>
            <person name="Ingolia T.D."/>
            <person name="Slater M.R."/>
            <person name="Craig E.A."/>
        </authorList>
    </citation>
    <scope>NUCLEOTIDE SEQUENCE [GENOMIC DNA] OF 444-535</scope>
    <source>
        <strain>ATCC 204508 / S288c</strain>
    </source>
</reference>
<reference key="5">
    <citation type="journal article" date="1995" name="Electrophoresis">
        <title>Gene linkage of two-dimensional polyacrylamide gel electrophoresis resolved proteins from isogene families in Saccharomyces cerevisiae by microsequencing of in-gel trypsin generated peptides.</title>
        <authorList>
            <person name="Norbeck J."/>
            <person name="Blomberg A."/>
        </authorList>
    </citation>
    <scope>PROTEIN SEQUENCE OF 39-49 AND 431-439</scope>
    <source>
        <strain>ATCC 38531 / Y41</strain>
    </source>
</reference>
<reference key="6">
    <citation type="journal article" date="1987" name="Mol. Cell. Biol.">
        <title>Complex interactions among members of an essential subfamily of hsp70 genes in Saccharomyces cerevisiae.</title>
        <authorList>
            <person name="Werner-Washburne M."/>
            <person name="Stone D.E."/>
            <person name="Craig E.A."/>
        </authorList>
    </citation>
    <scope>GENE FAMILY</scope>
</reference>
<reference key="7">
    <citation type="journal article" date="1989" name="J. Bacteriol.">
        <title>Yeast Hsp70 RNA levels vary in response to the physiological status of the cell.</title>
        <authorList>
            <person name="Werner-Washburne M."/>
            <person name="Becker J."/>
            <person name="Kosic-Smithers J."/>
            <person name="Craig E.A."/>
        </authorList>
    </citation>
    <scope>INDUCTION</scope>
</reference>
<reference key="8">
    <citation type="journal article" date="1992" name="Cell">
        <title>The translation machinery and 70 kd heat shock protein cooperate in protein synthesis.</title>
        <authorList>
            <person name="Nelson R.J."/>
            <person name="Ziegelhoffer T."/>
            <person name="Nicolet C."/>
            <person name="Werner-Washburne M."/>
            <person name="Craig E.A."/>
        </authorList>
    </citation>
    <scope>FUNCTION</scope>
    <scope>SUBCELLULAR LOCATION</scope>
</reference>
<reference key="9">
    <citation type="journal article" date="1997" name="Electrophoresis">
        <title>Proteome studies of Saccharomyces cerevisiae: identification and characterization of abundant proteins.</title>
        <authorList>
            <person name="Garrels J.I."/>
            <person name="McLaughlin C.S."/>
            <person name="Warner J.R."/>
            <person name="Futcher B."/>
            <person name="Latter G.I."/>
            <person name="Kobayashi R."/>
            <person name="Schwender B."/>
            <person name="Volpe T."/>
            <person name="Anderson D.S."/>
            <person name="Mesquita-Fuentes R."/>
            <person name="Payne W.E."/>
        </authorList>
    </citation>
    <scope>ACETYLATION AT ALA-2</scope>
</reference>
<reference key="10">
    <citation type="journal article" date="1998" name="EMBO J.">
        <title>The molecular chaperone Ssb from Saccharomyces cerevisiae is a component of the ribosome-nascent chain complex.</title>
        <authorList>
            <person name="Pfund C."/>
            <person name="Lopez-Hoyo N."/>
            <person name="Ziegelhoffer T."/>
            <person name="Schilke B.A."/>
            <person name="Lopez-Buesa P."/>
            <person name="Walter W.A."/>
            <person name="Wiedmann M."/>
            <person name="Craig E.A."/>
        </authorList>
    </citation>
    <scope>FUNCTION</scope>
    <scope>SUBUNIT</scope>
</reference>
<reference key="11">
    <citation type="journal article" date="1999" name="J. Bacteriol.">
        <title>SSB, encoding a ribosome-associated chaperone, is coordinately regulated with ribosomal protein genes.</title>
        <authorList>
            <person name="Lopez N."/>
            <person name="Halladay J."/>
            <person name="Walter W."/>
            <person name="Craig E.A."/>
        </authorList>
    </citation>
    <scope>INDUCTION</scope>
</reference>
<reference key="12">
    <citation type="journal article" date="2001" name="Mol. Biol. Cell">
        <title>Divergent functional properties of the ribosome-associated molecular chaperone Ssb compared with other Hsp70s.</title>
        <authorList>
            <person name="Pfund C."/>
            <person name="Huang P."/>
            <person name="Lopez-Hoyo N."/>
            <person name="Craig E.A."/>
        </authorList>
    </citation>
    <scope>FUNCTION</scope>
</reference>
<reference key="13">
    <citation type="journal article" date="2002" name="Proc. Natl. Acad. Sci. U.S.A.">
        <title>A functional chaperone triad on the yeast ribosome.</title>
        <authorList>
            <person name="Gautschi M."/>
            <person name="Mun A."/>
            <person name="Ross S."/>
            <person name="Rospert S."/>
        </authorList>
    </citation>
    <scope>FUNCTION</scope>
    <scope>SUBUNIT</scope>
</reference>
<reference key="14">
    <citation type="journal article" date="2003" name="Nature">
        <title>Global analysis of protein expression in yeast.</title>
        <authorList>
            <person name="Ghaemmaghami S."/>
            <person name="Huh W.-K."/>
            <person name="Bower K."/>
            <person name="Howson R.W."/>
            <person name="Belle A."/>
            <person name="Dephoure N."/>
            <person name="O'Shea E.K."/>
            <person name="Weissman J.S."/>
        </authorList>
    </citation>
    <scope>LEVEL OF PROTEIN EXPRESSION [LARGE SCALE ANALYSIS]</scope>
</reference>
<reference key="15">
    <citation type="journal article" date="2005" name="J. Biol. Chem.">
        <title>Hsp110 cooperates with different cytosolic HSP70 systems in a pathway for de novo folding.</title>
        <authorList>
            <person name="Yam A.Y."/>
            <person name="Albanese V."/>
            <person name="Lin H.T."/>
            <person name="Frydman J."/>
        </authorList>
    </citation>
    <scope>INTERACTION WITH SSE1</scope>
</reference>
<reference key="16">
    <citation type="journal article" date="2005" name="J. Biol. Chem.">
        <title>The yeast Hsp110 Sse1 functionally interacts with the Hsp70 chaperones Ssa and Ssb.</title>
        <authorList>
            <person name="Shaner L."/>
            <person name="Wegele H."/>
            <person name="Buchner J."/>
            <person name="Morano K.A."/>
        </authorList>
    </citation>
    <scope>FUNCTION</scope>
    <scope>INTERACTION WITH SSE1</scope>
</reference>
<reference key="17">
    <citation type="journal article" date="2005" name="Mol. Cell. Proteomics">
        <title>Quantitative phosphoproteomics applied to the yeast pheromone signaling pathway.</title>
        <authorList>
            <person name="Gruhler A."/>
            <person name="Olsen J.V."/>
            <person name="Mohammed S."/>
            <person name="Mortensen P."/>
            <person name="Faergeman N.J."/>
            <person name="Mann M."/>
            <person name="Jensen O.N."/>
        </authorList>
    </citation>
    <scope>PHOSPHORYLATION [LARGE SCALE ANALYSIS] AT THR-47</scope>
    <scope>IDENTIFICATION BY MASS SPECTROMETRY [LARGE SCALE ANALYSIS]</scope>
    <source>
        <strain>YAL6B</strain>
    </source>
</reference>
<reference key="18">
    <citation type="journal article" date="2008" name="Mol. Cell. Proteomics">
        <title>A multidimensional chromatography technology for in-depth phosphoproteome analysis.</title>
        <authorList>
            <person name="Albuquerque C.P."/>
            <person name="Smolka M.B."/>
            <person name="Payne S.H."/>
            <person name="Bafna V."/>
            <person name="Eng J."/>
            <person name="Zhou H."/>
        </authorList>
    </citation>
    <scope>PHOSPHORYLATION [LARGE SCALE ANALYSIS] AT THR-47</scope>
    <scope>IDENTIFICATION BY MASS SPECTROMETRY [LARGE SCALE ANALYSIS]</scope>
</reference>
<reference key="19">
    <citation type="journal article" date="2009" name="Science">
        <title>Global analysis of Cdk1 substrate phosphorylation sites provides insights into evolution.</title>
        <authorList>
            <person name="Holt L.J."/>
            <person name="Tuch B.B."/>
            <person name="Villen J."/>
            <person name="Johnson A.D."/>
            <person name="Gygi S.P."/>
            <person name="Morgan D.O."/>
        </authorList>
    </citation>
    <scope>IDENTIFICATION BY MASS SPECTROMETRY [LARGE SCALE ANALYSIS]</scope>
</reference>
<reference key="20">
    <citation type="journal article" date="2013" name="Cell">
        <title>The cotranslational function of ribosome-associated Hsp70 in eukaryotic protein homeostasis.</title>
        <authorList>
            <person name="Willmund F."/>
            <person name="del Alamo M."/>
            <person name="Pechmann S."/>
            <person name="Chen T."/>
            <person name="Albanese V."/>
            <person name="Dammer E.B."/>
            <person name="Peng J."/>
            <person name="Frydman J."/>
        </authorList>
    </citation>
    <scope>FUNCTION</scope>
    <scope>SUBCELLULAR LOCATION</scope>
    <scope>INTERACTION WITH RAC AND SSE1</scope>
</reference>
<reference key="21">
    <citation type="journal article" date="2016" name="Nat. Commun.">
        <title>Multivalent contacts of the Hsp70 Ssb contribute to its architecture on ribosomes and nascent chain interaction.</title>
        <authorList>
            <person name="Hanebuth M.A."/>
            <person name="Kityk R."/>
            <person name="Fries S.J."/>
            <person name="Jain A."/>
            <person name="Kriel A."/>
            <person name="Albanese V."/>
            <person name="Frickey T."/>
            <person name="Peter C."/>
            <person name="Mayer M.P."/>
            <person name="Frydman J."/>
            <person name="Deuerling E."/>
        </authorList>
    </citation>
    <scope>SUBUNIT</scope>
</reference>
<dbReference type="EC" id="3.6.4.10"/>
<dbReference type="EMBL" id="X78898">
    <property type="protein sequence ID" value="CAA55498.1"/>
    <property type="molecule type" value="Genomic_DNA"/>
</dbReference>
<dbReference type="EMBL" id="Z71485">
    <property type="protein sequence ID" value="CAA96111.1"/>
    <property type="molecule type" value="Genomic_DNA"/>
</dbReference>
<dbReference type="EMBL" id="AH001377">
    <property type="protein sequence ID" value="AAA34693.1"/>
    <property type="molecule type" value="Genomic_DNA"/>
</dbReference>
<dbReference type="EMBL" id="BK006947">
    <property type="protein sequence ID" value="DAA10347.1"/>
    <property type="molecule type" value="Genomic_DNA"/>
</dbReference>
<dbReference type="PIR" id="S50721">
    <property type="entry name" value="S50721"/>
</dbReference>
<dbReference type="RefSeq" id="NP_014190.1">
    <property type="nucleotide sequence ID" value="NM_001183047.1"/>
</dbReference>
<dbReference type="SMR" id="P40150"/>
<dbReference type="BioGRID" id="35627">
    <property type="interactions" value="2121"/>
</dbReference>
<dbReference type="DIP" id="DIP-7126N"/>
<dbReference type="FunCoup" id="P40150">
    <property type="interactions" value="963"/>
</dbReference>
<dbReference type="IntAct" id="P40150">
    <property type="interactions" value="137"/>
</dbReference>
<dbReference type="MINT" id="P40150"/>
<dbReference type="STRING" id="4932.YNL209W"/>
<dbReference type="GlyGen" id="P40150">
    <property type="glycosylation" value="1 site"/>
</dbReference>
<dbReference type="iPTMnet" id="P40150"/>
<dbReference type="PaxDb" id="4932-YNL209W"/>
<dbReference type="PeptideAtlas" id="P40150"/>
<dbReference type="TopDownProteomics" id="P40150"/>
<dbReference type="EnsemblFungi" id="YNL209W_mRNA">
    <property type="protein sequence ID" value="YNL209W"/>
    <property type="gene ID" value="YNL209W"/>
</dbReference>
<dbReference type="GeneID" id="855512"/>
<dbReference type="KEGG" id="sce:YNL209W"/>
<dbReference type="AGR" id="SGD:S000005153"/>
<dbReference type="SGD" id="S000005153">
    <property type="gene designation" value="SSB2"/>
</dbReference>
<dbReference type="VEuPathDB" id="FungiDB:YNL209W"/>
<dbReference type="eggNOG" id="KOG0101">
    <property type="taxonomic scope" value="Eukaryota"/>
</dbReference>
<dbReference type="GeneTree" id="ENSGT00940000154813"/>
<dbReference type="HOGENOM" id="CLU_005965_2_4_1"/>
<dbReference type="InParanoid" id="P40150"/>
<dbReference type="OMA" id="THCKELF"/>
<dbReference type="OrthoDB" id="2401965at2759"/>
<dbReference type="BioCyc" id="YEAST:G3O-33215-MONOMER"/>
<dbReference type="Reactome" id="R-SCE-3371453">
    <property type="pathway name" value="Regulation of HSF1-mediated heat shock response"/>
</dbReference>
<dbReference type="Reactome" id="R-SCE-3371497">
    <property type="pathway name" value="HSP90 chaperone cycle for steroid hormone receptors (SHR) in the presence of ligand"/>
</dbReference>
<dbReference type="Reactome" id="R-SCE-3371571">
    <property type="pathway name" value="HSF1-dependent transactivation"/>
</dbReference>
<dbReference type="Reactome" id="R-SCE-6798695">
    <property type="pathway name" value="Neutrophil degranulation"/>
</dbReference>
<dbReference type="Reactome" id="R-SCE-9841251">
    <property type="pathway name" value="Mitochondrial unfolded protein response (UPRmt)"/>
</dbReference>
<dbReference type="BioGRID-ORCS" id="855512">
    <property type="hits" value="3 hits in 10 CRISPR screens"/>
</dbReference>
<dbReference type="CD-CODE" id="E03F929F">
    <property type="entry name" value="Stress granule"/>
</dbReference>
<dbReference type="PRO" id="PR:P40150"/>
<dbReference type="Proteomes" id="UP000002311">
    <property type="component" value="Chromosome XIV"/>
</dbReference>
<dbReference type="RNAct" id="P40150">
    <property type="molecule type" value="protein"/>
</dbReference>
<dbReference type="GO" id="GO:0005737">
    <property type="term" value="C:cytoplasm"/>
    <property type="evidence" value="ECO:0007005"/>
    <property type="project" value="SGD"/>
</dbReference>
<dbReference type="GO" id="GO:0010494">
    <property type="term" value="C:cytoplasmic stress granule"/>
    <property type="evidence" value="ECO:0007005"/>
    <property type="project" value="SGD"/>
</dbReference>
<dbReference type="GO" id="GO:0005829">
    <property type="term" value="C:cytosol"/>
    <property type="evidence" value="ECO:0000318"/>
    <property type="project" value="GO_Central"/>
</dbReference>
<dbReference type="GO" id="GO:0005634">
    <property type="term" value="C:nucleus"/>
    <property type="evidence" value="ECO:0000318"/>
    <property type="project" value="GO_Central"/>
</dbReference>
<dbReference type="GO" id="GO:0005886">
    <property type="term" value="C:plasma membrane"/>
    <property type="evidence" value="ECO:0007005"/>
    <property type="project" value="SGD"/>
</dbReference>
<dbReference type="GO" id="GO:0005524">
    <property type="term" value="F:ATP binding"/>
    <property type="evidence" value="ECO:0007669"/>
    <property type="project" value="UniProtKB-KW"/>
</dbReference>
<dbReference type="GO" id="GO:0016887">
    <property type="term" value="F:ATP hydrolysis activity"/>
    <property type="evidence" value="ECO:0000314"/>
    <property type="project" value="SGD"/>
</dbReference>
<dbReference type="GO" id="GO:0140662">
    <property type="term" value="F:ATP-dependent protein folding chaperone"/>
    <property type="evidence" value="ECO:0007669"/>
    <property type="project" value="InterPro"/>
</dbReference>
<dbReference type="GO" id="GO:0031072">
    <property type="term" value="F:heat shock protein binding"/>
    <property type="evidence" value="ECO:0000318"/>
    <property type="project" value="GO_Central"/>
</dbReference>
<dbReference type="GO" id="GO:0044183">
    <property type="term" value="F:protein folding chaperone"/>
    <property type="evidence" value="ECO:0000318"/>
    <property type="project" value="GO_Central"/>
</dbReference>
<dbReference type="GO" id="GO:0051082">
    <property type="term" value="F:unfolded protein binding"/>
    <property type="evidence" value="ECO:0000314"/>
    <property type="project" value="SGD"/>
</dbReference>
<dbReference type="GO" id="GO:0051083">
    <property type="term" value="P:'de novo' cotranslational protein folding"/>
    <property type="evidence" value="ECO:0000314"/>
    <property type="project" value="SGD"/>
</dbReference>
<dbReference type="GO" id="GO:0042149">
    <property type="term" value="P:cellular response to glucose starvation"/>
    <property type="evidence" value="ECO:0000316"/>
    <property type="project" value="SGD"/>
</dbReference>
<dbReference type="GO" id="GO:0051085">
    <property type="term" value="P:chaperone cofactor-dependent protein refolding"/>
    <property type="evidence" value="ECO:0000318"/>
    <property type="project" value="GO_Central"/>
</dbReference>
<dbReference type="GO" id="GO:0002181">
    <property type="term" value="P:cytoplasmic translation"/>
    <property type="evidence" value="ECO:0000315"/>
    <property type="project" value="SGD"/>
</dbReference>
<dbReference type="GO" id="GO:0042026">
    <property type="term" value="P:protein refolding"/>
    <property type="evidence" value="ECO:0000318"/>
    <property type="project" value="GO_Central"/>
</dbReference>
<dbReference type="GO" id="GO:0006450">
    <property type="term" value="P:regulation of translational fidelity"/>
    <property type="evidence" value="ECO:0000315"/>
    <property type="project" value="SGD"/>
</dbReference>
<dbReference type="GO" id="GO:0000054">
    <property type="term" value="P:ribosomal subunit export from nucleus"/>
    <property type="evidence" value="ECO:0000316"/>
    <property type="project" value="SGD"/>
</dbReference>
<dbReference type="GO" id="GO:0006364">
    <property type="term" value="P:rRNA processing"/>
    <property type="evidence" value="ECO:0000316"/>
    <property type="project" value="SGD"/>
</dbReference>
<dbReference type="GO" id="GO:0006452">
    <property type="term" value="P:translational frameshifting"/>
    <property type="evidence" value="ECO:0000315"/>
    <property type="project" value="SGD"/>
</dbReference>
<dbReference type="CDD" id="cd24093">
    <property type="entry name" value="ASKHA_NBD_HSP70_Ssb"/>
    <property type="match status" value="1"/>
</dbReference>
<dbReference type="FunFam" id="3.90.640.10:FF:000002">
    <property type="entry name" value="Heat shock 70 kDa"/>
    <property type="match status" value="1"/>
</dbReference>
<dbReference type="FunFam" id="3.30.420.40:FF:000172">
    <property type="entry name" value="Heat shock 70 kDa protein"/>
    <property type="match status" value="1"/>
</dbReference>
<dbReference type="FunFam" id="1.20.1270.10:FF:000014">
    <property type="entry name" value="Heat shock protein 70"/>
    <property type="match status" value="1"/>
</dbReference>
<dbReference type="FunFam" id="3.30.420.40:FF:000026">
    <property type="entry name" value="Heat shock protein 70"/>
    <property type="match status" value="1"/>
</dbReference>
<dbReference type="FunFam" id="2.60.34.10:FF:000004">
    <property type="entry name" value="Heat shock protein SSB1"/>
    <property type="match status" value="1"/>
</dbReference>
<dbReference type="FunFam" id="3.30.30.30:FF:000005">
    <property type="entry name" value="Heat shock protein ssb1"/>
    <property type="match status" value="1"/>
</dbReference>
<dbReference type="Gene3D" id="1.20.1270.10">
    <property type="match status" value="1"/>
</dbReference>
<dbReference type="Gene3D" id="3.30.30.30">
    <property type="match status" value="1"/>
</dbReference>
<dbReference type="Gene3D" id="3.30.420.40">
    <property type="match status" value="2"/>
</dbReference>
<dbReference type="Gene3D" id="3.90.640.10">
    <property type="entry name" value="Actin, Chain A, domain 4"/>
    <property type="match status" value="1"/>
</dbReference>
<dbReference type="Gene3D" id="2.60.34.10">
    <property type="entry name" value="Substrate Binding Domain Of DNAk, Chain A, domain 1"/>
    <property type="match status" value="1"/>
</dbReference>
<dbReference type="InterPro" id="IPR043129">
    <property type="entry name" value="ATPase_NBD"/>
</dbReference>
<dbReference type="InterPro" id="IPR018181">
    <property type="entry name" value="Heat_shock_70_CS"/>
</dbReference>
<dbReference type="InterPro" id="IPR029048">
    <property type="entry name" value="HSP70_C_sf"/>
</dbReference>
<dbReference type="InterPro" id="IPR029047">
    <property type="entry name" value="HSP70_peptide-bd_sf"/>
</dbReference>
<dbReference type="InterPro" id="IPR013126">
    <property type="entry name" value="Hsp_70_fam"/>
</dbReference>
<dbReference type="NCBIfam" id="NF001413">
    <property type="entry name" value="PRK00290.1"/>
    <property type="match status" value="1"/>
</dbReference>
<dbReference type="PANTHER" id="PTHR19375">
    <property type="entry name" value="HEAT SHOCK PROTEIN 70KDA"/>
    <property type="match status" value="1"/>
</dbReference>
<dbReference type="Pfam" id="PF00012">
    <property type="entry name" value="HSP70"/>
    <property type="match status" value="1"/>
</dbReference>
<dbReference type="PRINTS" id="PR00301">
    <property type="entry name" value="HEATSHOCK70"/>
</dbReference>
<dbReference type="SUPFAM" id="SSF53067">
    <property type="entry name" value="Actin-like ATPase domain"/>
    <property type="match status" value="2"/>
</dbReference>
<dbReference type="SUPFAM" id="SSF100934">
    <property type="entry name" value="Heat shock protein 70kD (HSP70), C-terminal subdomain"/>
    <property type="match status" value="1"/>
</dbReference>
<dbReference type="SUPFAM" id="SSF100920">
    <property type="entry name" value="Heat shock protein 70kD (HSP70), peptide-binding domain"/>
    <property type="match status" value="1"/>
</dbReference>
<dbReference type="PROSITE" id="PS00297">
    <property type="entry name" value="HSP70_1"/>
    <property type="match status" value="1"/>
</dbReference>
<dbReference type="PROSITE" id="PS00329">
    <property type="entry name" value="HSP70_2"/>
    <property type="match status" value="1"/>
</dbReference>
<dbReference type="PROSITE" id="PS01036">
    <property type="entry name" value="HSP70_3"/>
    <property type="match status" value="1"/>
</dbReference>
<comment type="function">
    <text evidence="4 5 6 8 9 10 15">Ribosome-bound, Hsp70-type chaperone that assists in the cotranslational folding of newly synthesized proteins in the cytosol. Stimulates folding by interacting with nascent chains, binding to short, largely hydrophobic sequences exposed by unfolded proteins, thereby stabilizing longer, more slowly translated, and aggregation-prone nascent polypeptides and domains that cannot fold stably until fully synthesized. The Hsp70-protein substrate interaction depends on ATP-binding and on allosteric regulation between the NBD and the SBD. The ATP-bound state is characterized by a fast exchange rate of substrate (low affinity state), while in the ADP-bound state exchange is much slower (high affinity state). During the Hsp70 cycle, the chaperone switches between the ATP-bound state (open conformation) and the ADP-bound state (closed conformation) by major conformational rearrangements involving mainly the lid domain. Ssb cooperates with a specific Hsp40/Hsp70 co-chaperone termed the ribosome-associated complex (RAC), which stimulates the ATPase activity of the ribosome-associated pool of Ssbs and switches it to the high affinity substrate binding state. Hsp110 chaperone SSE1 and FES1 act as nucleotide exchange factors that cause substrate release.</text>
</comment>
<comment type="catalytic activity">
    <reaction evidence="2">
        <text>ATP + H2O = ADP + phosphate + H(+)</text>
        <dbReference type="Rhea" id="RHEA:13065"/>
        <dbReference type="ChEBI" id="CHEBI:15377"/>
        <dbReference type="ChEBI" id="CHEBI:15378"/>
        <dbReference type="ChEBI" id="CHEBI:30616"/>
        <dbReference type="ChEBI" id="CHEBI:43474"/>
        <dbReference type="ChEBI" id="CHEBI:456216"/>
        <dbReference type="EC" id="3.6.4.10"/>
    </reaction>
</comment>
<comment type="subunit">
    <text evidence="2 5 6 10 12 15">Binds to ribosomes (PubMed:1394434, PubMed:27917864, PubMed:9670014). Binds close to the ribosomal tunnel exit via contacts with both ribosomal proteins RPL35, RPL39 and RPL19, and rRNA (By similarity). Directly interacts with nascent polypeptides. This interaction is dependent on the ribosome-associated complex (RAC) (PubMed:11929994, PubMed:23332755). Interacts with SSE1 (PubMed:23332755).</text>
</comment>
<comment type="subcellular location">
    <subcellularLocation>
        <location evidence="10 20">Cytoplasm</location>
    </subcellularLocation>
    <text evidence="6 10 15">About 50% of the protein is associated with translating ribosomes, but sufficient Ssb exists in the cell for each ribosome to be associated with at least one Ssb molecule.</text>
</comment>
<comment type="induction">
    <text evidence="2 3 8 9 11 13">Expression decreases after heat shock or during growth to stationary phase (PubMed:2651414, PubMed:6761581). Up-regulated upon carbon upshift and down-regulated upon amino acid limitation in an HSF1-dependent manner (PubMed:10322015). Interacts with SSE1 (PubMed:16219770, PubMed:16221677). Interacts with FES1 (By similarity).</text>
</comment>
<comment type="miscellaneous">
    <text evidence="7">Present with 104000 molecules/cell in log phase SD medium.</text>
</comment>
<comment type="similarity">
    <text evidence="19">Belongs to the heat shock protein 70 family. Ssb-type Hsp70 subfamily.</text>
</comment>
<feature type="initiator methionine" description="Removed" evidence="14">
    <location>
        <position position="1"/>
    </location>
</feature>
<feature type="chain" id="PRO_0000078390" description="Ribosome-associated molecular chaperone SSB2">
    <location>
        <begin position="2"/>
        <end position="613"/>
    </location>
</feature>
<feature type="region of interest" description="Nucleotide binding domain (NBD)" evidence="1">
    <location>
        <begin position="2"/>
        <end position="391"/>
    </location>
</feature>
<feature type="region of interest" description="Inter-domain linker" evidence="1">
    <location>
        <begin position="392"/>
        <end position="402"/>
    </location>
</feature>
<feature type="region of interest" description="Substrate binding domain (SBD)" evidence="1">
    <location>
        <begin position="403"/>
        <end position="613"/>
    </location>
</feature>
<feature type="region of interest" description="Lid domain (SBDalpha)" evidence="1">
    <location>
        <begin position="516"/>
        <end position="612"/>
    </location>
</feature>
<feature type="region of interest" description="Required for interaction with ribosomes" evidence="12">
    <location>
        <begin position="601"/>
        <end position="613"/>
    </location>
</feature>
<feature type="short sequence motif" description="Contributes to ribosome binding" evidence="12">
    <location>
        <begin position="428"/>
        <end position="430"/>
    </location>
</feature>
<feature type="short sequence motif" description="Nuclear export signal" evidence="2">
    <location>
        <begin position="574"/>
        <end position="582"/>
    </location>
</feature>
<feature type="binding site" evidence="1">
    <location>
        <begin position="16"/>
        <end position="18"/>
    </location>
    <ligand>
        <name>ATP</name>
        <dbReference type="ChEBI" id="CHEBI:30616"/>
    </ligand>
</feature>
<feature type="binding site" evidence="1">
    <location>
        <position position="73"/>
    </location>
    <ligand>
        <name>ATP</name>
        <dbReference type="ChEBI" id="CHEBI:30616"/>
    </ligand>
</feature>
<feature type="binding site" evidence="1">
    <location>
        <begin position="205"/>
        <end position="207"/>
    </location>
    <ligand>
        <name>ATP</name>
        <dbReference type="ChEBI" id="CHEBI:30616"/>
    </ligand>
</feature>
<feature type="binding site" evidence="1">
    <location>
        <begin position="271"/>
        <end position="278"/>
    </location>
    <ligand>
        <name>ATP</name>
        <dbReference type="ChEBI" id="CHEBI:30616"/>
    </ligand>
</feature>
<feature type="binding site" evidence="1">
    <location>
        <position position="342"/>
    </location>
    <ligand>
        <name>ATP</name>
        <dbReference type="ChEBI" id="CHEBI:30616"/>
    </ligand>
</feature>
<feature type="modified residue" description="N-acetylalanine" evidence="14">
    <location>
        <position position="2"/>
    </location>
</feature>
<feature type="modified residue" description="Phosphothreonine" evidence="22 23">
    <location>
        <position position="47"/>
    </location>
</feature>
<feature type="modified residue" description="Phosphothreonine" evidence="2">
    <location>
        <position position="431"/>
    </location>
</feature>
<accession>P40150</accession>
<accession>D6W0Y1</accession>
<proteinExistence type="evidence at protein level"/>
<evidence type="ECO:0000250" key="1">
    <source>
        <dbReference type="UniProtKB" id="G0SCU5"/>
    </source>
</evidence>
<evidence type="ECO:0000250" key="2">
    <source>
        <dbReference type="UniProtKB" id="P11484"/>
    </source>
</evidence>
<evidence type="ECO:0000269" key="3">
    <source>
    </source>
</evidence>
<evidence type="ECO:0000269" key="4">
    <source>
    </source>
</evidence>
<evidence type="ECO:0000269" key="5">
    <source>
    </source>
</evidence>
<evidence type="ECO:0000269" key="6">
    <source>
    </source>
</evidence>
<evidence type="ECO:0000269" key="7">
    <source>
    </source>
</evidence>
<evidence type="ECO:0000269" key="8">
    <source>
    </source>
</evidence>
<evidence type="ECO:0000269" key="9">
    <source>
    </source>
</evidence>
<evidence type="ECO:0000269" key="10">
    <source>
    </source>
</evidence>
<evidence type="ECO:0000269" key="11">
    <source>
    </source>
</evidence>
<evidence type="ECO:0000269" key="12">
    <source>
    </source>
</evidence>
<evidence type="ECO:0000269" key="13">
    <source>
    </source>
</evidence>
<evidence type="ECO:0000269" key="14">
    <source>
    </source>
</evidence>
<evidence type="ECO:0000269" key="15">
    <source>
    </source>
</evidence>
<evidence type="ECO:0000303" key="16">
    <source>
    </source>
</evidence>
<evidence type="ECO:0000303" key="17">
    <source>
    </source>
</evidence>
<evidence type="ECO:0000303" key="18">
    <source>
    </source>
</evidence>
<evidence type="ECO:0000305" key="19"/>
<evidence type="ECO:0000305" key="20">
    <source>
    </source>
</evidence>
<evidence type="ECO:0000312" key="21">
    <source>
        <dbReference type="SGD" id="S000005153"/>
    </source>
</evidence>
<evidence type="ECO:0007744" key="22">
    <source>
    </source>
</evidence>
<evidence type="ECO:0007744" key="23">
    <source>
    </source>
</evidence>
<protein>
    <recommendedName>
        <fullName evidence="16">Ribosome-associated molecular chaperone SSB2</fullName>
        <ecNumber>3.6.4.10</ecNumber>
    </recommendedName>
    <alternativeName>
        <fullName evidence="17">Heat shock protein SSB2</fullName>
    </alternativeName>
    <alternativeName>
        <fullName>Hsp70 chaperone Ssb</fullName>
    </alternativeName>
</protein>
<organism>
    <name type="scientific">Saccharomyces cerevisiae (strain ATCC 204508 / S288c)</name>
    <name type="common">Baker's yeast</name>
    <dbReference type="NCBI Taxonomy" id="559292"/>
    <lineage>
        <taxon>Eukaryota</taxon>
        <taxon>Fungi</taxon>
        <taxon>Dikarya</taxon>
        <taxon>Ascomycota</taxon>
        <taxon>Saccharomycotina</taxon>
        <taxon>Saccharomycetes</taxon>
        <taxon>Saccharomycetales</taxon>
        <taxon>Saccharomycetaceae</taxon>
        <taxon>Saccharomyces</taxon>
    </lineage>
</organism>
<name>SSB2_YEAST</name>
<sequence>MAEGVFQGAIGIDLGTTYSCVATYESSVEIIANEQGNRVTPSFVAFTPQERLIGDAAKNQAALNPRNTVFDAKRLIGRRFDDESVQKDMKTWPFKVIDVDGNPVIEVQYLEETKTFSPQEISAMVLTKMKEIAEAKIGKKVEKAVITVPAYFNDAQRQATKDAGAISGLNVLRIINEPTAAAIAYGLGAGKSEKERHVLIFDLGGGTFDVSLLHIAGGVYTVKSTSGNTHLGGQDFDTNLLEHFKAEFKKKTGLDISDDARALRRLRTAAERAKRTLSSVTQTTVEVDSLFDGEDFESSLTRARFEDLNAALFKSTLEPVEQVLKDAKISKSQIDEVVLVGGSTRIPKVQKLLSDFFDGKQLEKSINPDEAVAYGAAVQGAILTGQSTSDETKDLLLLDVAPLSLGVGMQGDIFGIVVPRNTTVPTIKRRTFTTVSDNQTTVQFPVYQGERVNCKENTLLGEFDLKNIPMMPAGEPVLEAIFEVDANGILKVTAVEKSTGKSSNITISNAVGRLSSEEIEKMVNQAEEFKAADEAFAKKHEARQRLESYVASIEQTVTDPVLSSKLKRGSKSKIEAALSDALAALQIEDPSADELRKAEVGLKRVVTKAMSSR</sequence>
<gene>
    <name evidence="17" type="primary">SSB2</name>
    <name evidence="18" type="synonym">YG103</name>
    <name evidence="21" type="ordered locus">YNL209W</name>
    <name type="ORF">N1333</name>
</gene>